<proteinExistence type="inferred from homology"/>
<accession>Q98F04</accession>
<comment type="function">
    <text evidence="1">Accelerates the degradation of transcripts by removing pyrophosphate from the 5'-end of triphosphorylated RNA, leading to a more labile monophosphorylated state that can stimulate subsequent ribonuclease cleavage.</text>
</comment>
<comment type="cofactor">
    <cofactor evidence="1">
        <name>a divalent metal cation</name>
        <dbReference type="ChEBI" id="CHEBI:60240"/>
    </cofactor>
</comment>
<comment type="similarity">
    <text evidence="1">Belongs to the Nudix hydrolase family. RppH subfamily.</text>
</comment>
<evidence type="ECO:0000255" key="1">
    <source>
        <dbReference type="HAMAP-Rule" id="MF_00298"/>
    </source>
</evidence>
<feature type="chain" id="PRO_0000057021" description="RNA pyrophosphohydrolase">
    <location>
        <begin position="1"/>
        <end position="173"/>
    </location>
</feature>
<feature type="domain" description="Nudix hydrolase" evidence="1">
    <location>
        <begin position="13"/>
        <end position="166"/>
    </location>
</feature>
<feature type="short sequence motif" description="Nudix box">
    <location>
        <begin position="54"/>
        <end position="75"/>
    </location>
</feature>
<gene>
    <name evidence="1" type="primary">rppH</name>
    <name evidence="1" type="synonym">nudH</name>
    <name type="ordered locus">mll3998</name>
</gene>
<name>RPPH_RHILO</name>
<keyword id="KW-0378">Hydrolase</keyword>
<organism>
    <name type="scientific">Mesorhizobium japonicum (strain LMG 29417 / CECT 9101 / MAFF 303099)</name>
    <name type="common">Mesorhizobium loti (strain MAFF 303099)</name>
    <dbReference type="NCBI Taxonomy" id="266835"/>
    <lineage>
        <taxon>Bacteria</taxon>
        <taxon>Pseudomonadati</taxon>
        <taxon>Pseudomonadota</taxon>
        <taxon>Alphaproteobacteria</taxon>
        <taxon>Hyphomicrobiales</taxon>
        <taxon>Phyllobacteriaceae</taxon>
        <taxon>Mesorhizobium</taxon>
    </lineage>
</organism>
<sequence>MPKTKKVDRETLPYRPCVGLMILNGEGLVWVGHRIAEPDSEFAGTTQLWQMPQGGIDKGEEPLQAAERELYEETGMRSVSLLAEAPDWINYDLPDHLVGIAFKGRYRGQMQKWFAFRFHGDGSEIQINPPPGGHTAEFDKWSWRPMQDLPDLIVPFKRKVYEEVVAAFSHLAR</sequence>
<protein>
    <recommendedName>
        <fullName evidence="1">RNA pyrophosphohydrolase</fullName>
        <ecNumber evidence="1">3.6.1.-</ecNumber>
    </recommendedName>
    <alternativeName>
        <fullName evidence="1">(Di)nucleoside polyphosphate hydrolase</fullName>
    </alternativeName>
</protein>
<dbReference type="EC" id="3.6.1.-" evidence="1"/>
<dbReference type="EMBL" id="BA000012">
    <property type="protein sequence ID" value="BAB50763.1"/>
    <property type="molecule type" value="Genomic_DNA"/>
</dbReference>
<dbReference type="RefSeq" id="WP_010912106.1">
    <property type="nucleotide sequence ID" value="NC_002678.2"/>
</dbReference>
<dbReference type="SMR" id="Q98F04"/>
<dbReference type="KEGG" id="mlo:mll3998"/>
<dbReference type="eggNOG" id="COG0494">
    <property type="taxonomic scope" value="Bacteria"/>
</dbReference>
<dbReference type="HOGENOM" id="CLU_087195_3_0_5"/>
<dbReference type="Proteomes" id="UP000000552">
    <property type="component" value="Chromosome"/>
</dbReference>
<dbReference type="GO" id="GO:0034432">
    <property type="term" value="F:bis(5'-adenosyl)-pentaphosphatase activity"/>
    <property type="evidence" value="ECO:0007669"/>
    <property type="project" value="TreeGrafter"/>
</dbReference>
<dbReference type="GO" id="GO:0008893">
    <property type="term" value="F:guanosine-3',5'-bis(diphosphate) 3'-diphosphatase activity"/>
    <property type="evidence" value="ECO:0007669"/>
    <property type="project" value="TreeGrafter"/>
</dbReference>
<dbReference type="GO" id="GO:0006753">
    <property type="term" value="P:nucleoside phosphate metabolic process"/>
    <property type="evidence" value="ECO:0007669"/>
    <property type="project" value="TreeGrafter"/>
</dbReference>
<dbReference type="GO" id="GO:0019693">
    <property type="term" value="P:ribose phosphate metabolic process"/>
    <property type="evidence" value="ECO:0007669"/>
    <property type="project" value="TreeGrafter"/>
</dbReference>
<dbReference type="CDD" id="cd03671">
    <property type="entry name" value="NUDIX_Ap4A_hydrolase_plant_like"/>
    <property type="match status" value="1"/>
</dbReference>
<dbReference type="Gene3D" id="3.90.79.10">
    <property type="entry name" value="Nucleoside Triphosphate Pyrophosphohydrolase"/>
    <property type="match status" value="1"/>
</dbReference>
<dbReference type="HAMAP" id="MF_00298">
    <property type="entry name" value="Nudix_RppH"/>
    <property type="match status" value="1"/>
</dbReference>
<dbReference type="InterPro" id="IPR020476">
    <property type="entry name" value="Nudix_hydrolase"/>
</dbReference>
<dbReference type="InterPro" id="IPR015797">
    <property type="entry name" value="NUDIX_hydrolase-like_dom_sf"/>
</dbReference>
<dbReference type="InterPro" id="IPR020084">
    <property type="entry name" value="NUDIX_hydrolase_CS"/>
</dbReference>
<dbReference type="InterPro" id="IPR000086">
    <property type="entry name" value="NUDIX_hydrolase_dom"/>
</dbReference>
<dbReference type="InterPro" id="IPR022927">
    <property type="entry name" value="RppH"/>
</dbReference>
<dbReference type="NCBIfam" id="NF001938">
    <property type="entry name" value="PRK00714.1-5"/>
    <property type="match status" value="1"/>
</dbReference>
<dbReference type="PANTHER" id="PTHR11839:SF22">
    <property type="entry name" value="NUDIX HYDROLASE 26, CHLOROPLASTIC"/>
    <property type="match status" value="1"/>
</dbReference>
<dbReference type="PANTHER" id="PTHR11839">
    <property type="entry name" value="UDP/ADP-SUGAR PYROPHOSPHATASE"/>
    <property type="match status" value="1"/>
</dbReference>
<dbReference type="Pfam" id="PF00293">
    <property type="entry name" value="NUDIX"/>
    <property type="match status" value="1"/>
</dbReference>
<dbReference type="PRINTS" id="PR00502">
    <property type="entry name" value="NUDIXFAMILY"/>
</dbReference>
<dbReference type="SUPFAM" id="SSF55811">
    <property type="entry name" value="Nudix"/>
    <property type="match status" value="1"/>
</dbReference>
<dbReference type="PROSITE" id="PS51462">
    <property type="entry name" value="NUDIX"/>
    <property type="match status" value="1"/>
</dbReference>
<dbReference type="PROSITE" id="PS00893">
    <property type="entry name" value="NUDIX_BOX"/>
    <property type="match status" value="1"/>
</dbReference>
<reference key="1">
    <citation type="journal article" date="2000" name="DNA Res.">
        <title>Complete genome structure of the nitrogen-fixing symbiotic bacterium Mesorhizobium loti.</title>
        <authorList>
            <person name="Kaneko T."/>
            <person name="Nakamura Y."/>
            <person name="Sato S."/>
            <person name="Asamizu E."/>
            <person name="Kato T."/>
            <person name="Sasamoto S."/>
            <person name="Watanabe A."/>
            <person name="Idesawa K."/>
            <person name="Ishikawa A."/>
            <person name="Kawashima K."/>
            <person name="Kimura T."/>
            <person name="Kishida Y."/>
            <person name="Kiyokawa C."/>
            <person name="Kohara M."/>
            <person name="Matsumoto M."/>
            <person name="Matsuno A."/>
            <person name="Mochizuki Y."/>
            <person name="Nakayama S."/>
            <person name="Nakazaki N."/>
            <person name="Shimpo S."/>
            <person name="Sugimoto M."/>
            <person name="Takeuchi C."/>
            <person name="Yamada M."/>
            <person name="Tabata S."/>
        </authorList>
    </citation>
    <scope>NUCLEOTIDE SEQUENCE [LARGE SCALE GENOMIC DNA]</scope>
    <source>
        <strain>LMG 29417 / CECT 9101 / MAFF 303099</strain>
    </source>
</reference>